<comment type="function">
    <text evidence="1">Negatively regulates long-term potentiation and modulates adult synaptic plasticity.</text>
</comment>
<comment type="subcellular location">
    <subcellularLocation>
        <location evidence="1">Synapse</location>
    </subcellularLocation>
    <subcellularLocation>
        <location evidence="1">Synaptic cleft</location>
    </subcellularLocation>
    <text evidence="1">Detected in both the presynaptic and postsynaptic regions of the synapse and is secreted from neurons into the synaptic cleft. May be released by neuronal dense core vesicles which mediate the release of cleaved neuropeptides.</text>
</comment>
<comment type="PTM">
    <text evidence="1">Rapidly degraded by proteolysis following neuronal stimulation, resulting in increased AMPA receptor clustering.</text>
</comment>
<comment type="similarity">
    <text evidence="3">Belongs to the UPF0545 family.</text>
</comment>
<comment type="sequence caution" evidence="3">
    <conflict type="erroneous initiation">
        <sequence resource="EMBL-CDS" id="AAI22394"/>
    </conflict>
</comment>
<comment type="sequence caution" evidence="3">
    <conflict type="erroneous initiation">
        <sequence resource="EMBL-CDS" id="AAI46717"/>
    </conflict>
</comment>
<evidence type="ECO:0000250" key="1">
    <source>
        <dbReference type="UniProtKB" id="Q3U595"/>
    </source>
</evidence>
<evidence type="ECO:0000256" key="2">
    <source>
        <dbReference type="SAM" id="MobiDB-lite"/>
    </source>
</evidence>
<evidence type="ECO:0000305" key="3"/>
<accession>Q0P3X7</accession>
<accession>A6H8R2</accession>
<sequence>MAGSQAQWRPPRSCDIYCSELKHCKSLRNRFHEYYTYGRAPDCQQWKQDYQNCKDWEKNHSTQAKDSLQESERKRLADQRKFTPVWELRQKPPSDWHLPLNQGEPQDP</sequence>
<organism>
    <name type="scientific">Danio rerio</name>
    <name type="common">Zebrafish</name>
    <name type="synonym">Brachydanio rerio</name>
    <dbReference type="NCBI Taxonomy" id="7955"/>
    <lineage>
        <taxon>Eukaryota</taxon>
        <taxon>Metazoa</taxon>
        <taxon>Chordata</taxon>
        <taxon>Craniata</taxon>
        <taxon>Vertebrata</taxon>
        <taxon>Euteleostomi</taxon>
        <taxon>Actinopterygii</taxon>
        <taxon>Neopterygii</taxon>
        <taxon>Teleostei</taxon>
        <taxon>Ostariophysi</taxon>
        <taxon>Cypriniformes</taxon>
        <taxon>Danionidae</taxon>
        <taxon>Danioninae</taxon>
        <taxon>Danio</taxon>
    </lineage>
</organism>
<keyword id="KW-1185">Reference proteome</keyword>
<keyword id="KW-0964">Secreted</keyword>
<keyword id="KW-0770">Synapse</keyword>
<name>CV039_DANRE</name>
<reference key="1">
    <citation type="submission" date="2006-08" db="EMBL/GenBank/DDBJ databases">
        <authorList>
            <consortium name="NIH - Zebrafish Gene Collection (ZGC) project"/>
        </authorList>
    </citation>
    <scope>NUCLEOTIDE SEQUENCE [LARGE SCALE MRNA]</scope>
    <source>
        <tissue>Eye</tissue>
        <tissue>Larva</tissue>
    </source>
</reference>
<proteinExistence type="inferred from homology"/>
<dbReference type="EMBL" id="BC122393">
    <property type="protein sequence ID" value="AAI22394.1"/>
    <property type="status" value="ALT_INIT"/>
    <property type="molecule type" value="mRNA"/>
</dbReference>
<dbReference type="EMBL" id="BC146716">
    <property type="protein sequence ID" value="AAI46717.1"/>
    <property type="status" value="ALT_INIT"/>
    <property type="molecule type" value="mRNA"/>
</dbReference>
<dbReference type="SMR" id="Q0P3X7"/>
<dbReference type="FunCoup" id="Q0P3X7">
    <property type="interactions" value="420"/>
</dbReference>
<dbReference type="STRING" id="7955.ENSDARP00000115603"/>
<dbReference type="PaxDb" id="7955-ENSDARP00000115603"/>
<dbReference type="AGR" id="ZFIN:ZDB-GENE-081104-234"/>
<dbReference type="ZFIN" id="ZDB-GENE-081104-234">
    <property type="gene designation" value="si:ch211-51h9.6"/>
</dbReference>
<dbReference type="eggNOG" id="ENOG502S4W2">
    <property type="taxonomic scope" value="Eukaryota"/>
</dbReference>
<dbReference type="InParanoid" id="Q0P3X7"/>
<dbReference type="PRO" id="PR:Q0P3X7"/>
<dbReference type="Proteomes" id="UP000000437">
    <property type="component" value="Unplaced"/>
</dbReference>
<dbReference type="GO" id="GO:0045202">
    <property type="term" value="C:synapse"/>
    <property type="evidence" value="ECO:0000250"/>
    <property type="project" value="UniProtKB"/>
</dbReference>
<dbReference type="GO" id="GO:0043083">
    <property type="term" value="C:synaptic cleft"/>
    <property type="evidence" value="ECO:0000250"/>
    <property type="project" value="UniProtKB"/>
</dbReference>
<dbReference type="GO" id="GO:1900272">
    <property type="term" value="P:negative regulation of long-term synaptic potentiation"/>
    <property type="evidence" value="ECO:0000250"/>
    <property type="project" value="UniProtKB"/>
</dbReference>
<dbReference type="GO" id="GO:0048167">
    <property type="term" value="P:regulation of synaptic plasticity"/>
    <property type="evidence" value="ECO:0000250"/>
    <property type="project" value="UniProtKB"/>
</dbReference>
<dbReference type="InterPro" id="IPR021475">
    <property type="entry name" value="Pants/Emi1-like"/>
</dbReference>
<dbReference type="PANTHER" id="PTHR28052">
    <property type="entry name" value="UPF0545 PROTEIN C22ORF39"/>
    <property type="match status" value="1"/>
</dbReference>
<dbReference type="PANTHER" id="PTHR28052:SF1">
    <property type="entry name" value="UPF0545 PROTEIN C22ORF39"/>
    <property type="match status" value="1"/>
</dbReference>
<dbReference type="Pfam" id="PF11326">
    <property type="entry name" value="PANTS-like"/>
    <property type="match status" value="1"/>
</dbReference>
<feature type="chain" id="PRO_0000326133" description="Synaptic plasticity regulator PANTS">
    <location>
        <begin position="1"/>
        <end position="108"/>
    </location>
</feature>
<feature type="region of interest" description="Disordered" evidence="2">
    <location>
        <begin position="58"/>
        <end position="108"/>
    </location>
</feature>
<feature type="compositionally biased region" description="Basic and acidic residues" evidence="2">
    <location>
        <begin position="67"/>
        <end position="81"/>
    </location>
</feature>
<feature type="sequence conflict" description="In Ref. 1; AAI46717." evidence="3" ref="1">
    <original>R</original>
    <variation>S</variation>
    <location>
        <position position="28"/>
    </location>
</feature>
<feature type="sequence conflict" description="In Ref. 1; AAI46717." evidence="3" ref="1">
    <original>E</original>
    <variation>K</variation>
    <location>
        <position position="104"/>
    </location>
</feature>
<protein>
    <recommendedName>
        <fullName evidence="1">Synaptic plasticity regulator PANTS</fullName>
    </recommendedName>
    <alternativeName>
        <fullName evidence="1">Plasticity-associated neural transcript short</fullName>
    </alternativeName>
</protein>